<evidence type="ECO:0000255" key="1">
    <source>
        <dbReference type="HAMAP-Rule" id="MF_01466"/>
    </source>
</evidence>
<feature type="chain" id="PRO_0000414876" description="Accessory Sec system protein translocase subunit SecY2">
    <location>
        <begin position="1"/>
        <end position="405"/>
    </location>
</feature>
<feature type="transmembrane region" description="Helical" evidence="1">
    <location>
        <begin position="14"/>
        <end position="34"/>
    </location>
</feature>
<feature type="transmembrane region" description="Helical" evidence="1">
    <location>
        <begin position="65"/>
        <end position="85"/>
    </location>
</feature>
<feature type="transmembrane region" description="Helical" evidence="1">
    <location>
        <begin position="104"/>
        <end position="124"/>
    </location>
</feature>
<feature type="transmembrane region" description="Helical" evidence="1">
    <location>
        <begin position="131"/>
        <end position="151"/>
    </location>
</feature>
<feature type="transmembrane region" description="Helical" evidence="1">
    <location>
        <begin position="156"/>
        <end position="176"/>
    </location>
</feature>
<feature type="transmembrane region" description="Helical" evidence="1">
    <location>
        <begin position="190"/>
        <end position="210"/>
    </location>
</feature>
<feature type="transmembrane region" description="Helical" evidence="1">
    <location>
        <begin position="243"/>
        <end position="263"/>
    </location>
</feature>
<feature type="transmembrane region" description="Helical" evidence="1">
    <location>
        <begin position="285"/>
        <end position="305"/>
    </location>
</feature>
<feature type="transmembrane region" description="Helical" evidence="1">
    <location>
        <begin position="343"/>
        <end position="363"/>
    </location>
</feature>
<feature type="transmembrane region" description="Helical" evidence="1">
    <location>
        <begin position="368"/>
        <end position="388"/>
    </location>
</feature>
<organism>
    <name type="scientific">Streptococcus oralis (strain Uo5)</name>
    <dbReference type="NCBI Taxonomy" id="927666"/>
    <lineage>
        <taxon>Bacteria</taxon>
        <taxon>Bacillati</taxon>
        <taxon>Bacillota</taxon>
        <taxon>Bacilli</taxon>
        <taxon>Lactobacillales</taxon>
        <taxon>Streptococcaceae</taxon>
        <taxon>Streptococcus</taxon>
    </lineage>
</organism>
<reference key="1">
    <citation type="journal article" date="2011" name="J. Bacteriol.">
        <title>Genome of Streptococcus oralis strain Uo5.</title>
        <authorList>
            <person name="Reichmann P."/>
            <person name="Nuhn M."/>
            <person name="Denapaite D."/>
            <person name="Bruckner R."/>
            <person name="Henrich B."/>
            <person name="Maurer P."/>
            <person name="Rieger M."/>
            <person name="Klages S."/>
            <person name="Reinhard R."/>
            <person name="Hakenbeck R."/>
        </authorList>
    </citation>
    <scope>NUCLEOTIDE SEQUENCE [LARGE SCALE GENOMIC DNA]</scope>
    <source>
        <strain>Uo5</strain>
    </source>
</reference>
<dbReference type="EMBL" id="FR720602">
    <property type="protein sequence ID" value="CBZ01232.1"/>
    <property type="molecule type" value="Genomic_DNA"/>
</dbReference>
<dbReference type="RefSeq" id="WP_000160075.1">
    <property type="nucleotide sequence ID" value="NC_015291.1"/>
</dbReference>
<dbReference type="KEGG" id="sor:SOR_1580"/>
<dbReference type="eggNOG" id="COG0201">
    <property type="taxonomic scope" value="Bacteria"/>
</dbReference>
<dbReference type="HOGENOM" id="CLU_030313_4_0_9"/>
<dbReference type="Proteomes" id="UP000008131">
    <property type="component" value="Chromosome"/>
</dbReference>
<dbReference type="GO" id="GO:0005886">
    <property type="term" value="C:plasma membrane"/>
    <property type="evidence" value="ECO:0007669"/>
    <property type="project" value="UniProtKB-SubCell"/>
</dbReference>
<dbReference type="GO" id="GO:0065002">
    <property type="term" value="P:intracellular protein transmembrane transport"/>
    <property type="evidence" value="ECO:0007669"/>
    <property type="project" value="UniProtKB-UniRule"/>
</dbReference>
<dbReference type="GO" id="GO:0006605">
    <property type="term" value="P:protein targeting"/>
    <property type="evidence" value="ECO:0007669"/>
    <property type="project" value="UniProtKB-UniRule"/>
</dbReference>
<dbReference type="Gene3D" id="1.10.3370.10">
    <property type="entry name" value="SecY subunit domain"/>
    <property type="match status" value="1"/>
</dbReference>
<dbReference type="HAMAP" id="MF_01466">
    <property type="entry name" value="SecY2"/>
    <property type="match status" value="1"/>
</dbReference>
<dbReference type="InterPro" id="IPR002208">
    <property type="entry name" value="SecY/SEC61-alpha"/>
</dbReference>
<dbReference type="InterPro" id="IPR014269">
    <property type="entry name" value="SecY2"/>
</dbReference>
<dbReference type="InterPro" id="IPR023201">
    <property type="entry name" value="SecY_dom_sf"/>
</dbReference>
<dbReference type="NCBIfam" id="TIGR02920">
    <property type="entry name" value="acc_sec_Y2"/>
    <property type="match status" value="1"/>
</dbReference>
<dbReference type="NCBIfam" id="NF009082">
    <property type="entry name" value="PRK12417.1"/>
    <property type="match status" value="1"/>
</dbReference>
<dbReference type="PANTHER" id="PTHR10906">
    <property type="entry name" value="SECY/SEC61-ALPHA FAMILY MEMBER"/>
    <property type="match status" value="1"/>
</dbReference>
<dbReference type="Pfam" id="PF00344">
    <property type="entry name" value="SecY"/>
    <property type="match status" value="1"/>
</dbReference>
<dbReference type="PIRSF" id="PIRSF004557">
    <property type="entry name" value="SecY"/>
    <property type="match status" value="1"/>
</dbReference>
<dbReference type="PRINTS" id="PR00303">
    <property type="entry name" value="SECYTRNLCASE"/>
</dbReference>
<dbReference type="SUPFAM" id="SSF103491">
    <property type="entry name" value="Preprotein translocase SecY subunit"/>
    <property type="match status" value="1"/>
</dbReference>
<accession>F2QF13</accession>
<sequence length="405" mass="45297">MTKFRSSIAVKKGMCTLFLLFIYVLGSRIALPFVDLNSRNFLGGSAAYLDFSVALTGGNLRSLSLFSIGLSPWMSAMILWQMFSFSKKLGLNSVSSEVQDRRKMYLTLGIALIQALALTTNLPVQAPYNPFLVFLLNTSLLVAGTFFLVWLSDINATIGVGGPVVILLASMVASLPQDIIQSIQVHKISLGLLFLLLVLGVLFTYLVVLFYRARYRIPINKIGLHSRFKRYSYLEIMLNPAGGMPYMYVMSLMGLPSYLLLLLQHLDKGNPLYSAMLEQYAMGKPLWIYAYILILFVFSIAFAFVNVSGQQIADQMKQSGDYIYGVYPGEDTSRFINRLVLRFALIGAVFNVTLAGVPILFVLQDESLLKVSMIPGLFLILSGMLFTIHDELQALRLNERYQPLF</sequence>
<protein>
    <recommendedName>
        <fullName evidence="1">Accessory Sec system protein translocase subunit SecY2</fullName>
    </recommendedName>
</protein>
<proteinExistence type="inferred from homology"/>
<keyword id="KW-1003">Cell membrane</keyword>
<keyword id="KW-0472">Membrane</keyword>
<keyword id="KW-0653">Protein transport</keyword>
<keyword id="KW-0811">Translocation</keyword>
<keyword id="KW-0812">Transmembrane</keyword>
<keyword id="KW-1133">Transmembrane helix</keyword>
<keyword id="KW-0813">Transport</keyword>
<gene>
    <name evidence="1" type="primary">secY2</name>
    <name type="ordered locus">SOR_1580</name>
</gene>
<name>SECY2_STROU</name>
<comment type="function">
    <text evidence="1">Part of the accessory SecA2/SecY2 system specifically required for export of possible cell wall proteins. The central subunit of a protein translocation channel.</text>
</comment>
<comment type="subunit">
    <text evidence="1">Component of the accessory SecA2/SecY2 protein translocase complex required to export cell wall proteins. May form heterotrimers with SecE and SecG subunits.</text>
</comment>
<comment type="subcellular location">
    <subcellularLocation>
        <location evidence="1">Cell membrane</location>
        <topology evidence="1">Multi-pass membrane protein</topology>
    </subcellularLocation>
</comment>
<comment type="similarity">
    <text evidence="1">Belongs to the SecY/SEC61-alpha family. SecY2 subfamily.</text>
</comment>